<comment type="function">
    <text evidence="1">Methylates ribosomal protein L11.</text>
</comment>
<comment type="catalytic activity">
    <reaction evidence="1">
        <text>L-lysyl-[protein] + 3 S-adenosyl-L-methionine = N(6),N(6),N(6)-trimethyl-L-lysyl-[protein] + 3 S-adenosyl-L-homocysteine + 3 H(+)</text>
        <dbReference type="Rhea" id="RHEA:54192"/>
        <dbReference type="Rhea" id="RHEA-COMP:9752"/>
        <dbReference type="Rhea" id="RHEA-COMP:13826"/>
        <dbReference type="ChEBI" id="CHEBI:15378"/>
        <dbReference type="ChEBI" id="CHEBI:29969"/>
        <dbReference type="ChEBI" id="CHEBI:57856"/>
        <dbReference type="ChEBI" id="CHEBI:59789"/>
        <dbReference type="ChEBI" id="CHEBI:61961"/>
    </reaction>
</comment>
<comment type="subcellular location">
    <subcellularLocation>
        <location evidence="1">Cytoplasm</location>
    </subcellularLocation>
</comment>
<comment type="similarity">
    <text evidence="1">Belongs to the methyltransferase superfamily. PrmA family.</text>
</comment>
<accession>A5GV37</accession>
<organism>
    <name type="scientific">Synechococcus sp. (strain RCC307)</name>
    <dbReference type="NCBI Taxonomy" id="316278"/>
    <lineage>
        <taxon>Bacteria</taxon>
        <taxon>Bacillati</taxon>
        <taxon>Cyanobacteriota</taxon>
        <taxon>Cyanophyceae</taxon>
        <taxon>Synechococcales</taxon>
        <taxon>Synechococcaceae</taxon>
        <taxon>Synechococcus</taxon>
    </lineage>
</organism>
<proteinExistence type="inferred from homology"/>
<dbReference type="EC" id="2.1.1.-" evidence="1"/>
<dbReference type="EMBL" id="CT978603">
    <property type="protein sequence ID" value="CAK28746.1"/>
    <property type="molecule type" value="Genomic_DNA"/>
</dbReference>
<dbReference type="SMR" id="A5GV37"/>
<dbReference type="STRING" id="316278.SynRCC307_1843"/>
<dbReference type="KEGG" id="syr:SynRCC307_1843"/>
<dbReference type="eggNOG" id="COG2264">
    <property type="taxonomic scope" value="Bacteria"/>
</dbReference>
<dbReference type="HOGENOM" id="CLU_049382_0_1_3"/>
<dbReference type="OrthoDB" id="9785995at2"/>
<dbReference type="Proteomes" id="UP000001115">
    <property type="component" value="Chromosome"/>
</dbReference>
<dbReference type="GO" id="GO:0005737">
    <property type="term" value="C:cytoplasm"/>
    <property type="evidence" value="ECO:0007669"/>
    <property type="project" value="UniProtKB-SubCell"/>
</dbReference>
<dbReference type="GO" id="GO:0016279">
    <property type="term" value="F:protein-lysine N-methyltransferase activity"/>
    <property type="evidence" value="ECO:0007669"/>
    <property type="project" value="RHEA"/>
</dbReference>
<dbReference type="GO" id="GO:0032259">
    <property type="term" value="P:methylation"/>
    <property type="evidence" value="ECO:0007669"/>
    <property type="project" value="UniProtKB-KW"/>
</dbReference>
<dbReference type="CDD" id="cd02440">
    <property type="entry name" value="AdoMet_MTases"/>
    <property type="match status" value="1"/>
</dbReference>
<dbReference type="Gene3D" id="3.40.50.150">
    <property type="entry name" value="Vaccinia Virus protein VP39"/>
    <property type="match status" value="1"/>
</dbReference>
<dbReference type="HAMAP" id="MF_00735">
    <property type="entry name" value="Methyltr_PrmA"/>
    <property type="match status" value="1"/>
</dbReference>
<dbReference type="InterPro" id="IPR050078">
    <property type="entry name" value="Ribosomal_L11_MeTrfase_PrmA"/>
</dbReference>
<dbReference type="InterPro" id="IPR004498">
    <property type="entry name" value="Ribosomal_PrmA_MeTrfase"/>
</dbReference>
<dbReference type="InterPro" id="IPR029063">
    <property type="entry name" value="SAM-dependent_MTases_sf"/>
</dbReference>
<dbReference type="NCBIfam" id="TIGR00406">
    <property type="entry name" value="prmA"/>
    <property type="match status" value="1"/>
</dbReference>
<dbReference type="PANTHER" id="PTHR43648">
    <property type="entry name" value="ELECTRON TRANSFER FLAVOPROTEIN BETA SUBUNIT LYSINE METHYLTRANSFERASE"/>
    <property type="match status" value="1"/>
</dbReference>
<dbReference type="PANTHER" id="PTHR43648:SF1">
    <property type="entry name" value="ELECTRON TRANSFER FLAVOPROTEIN BETA SUBUNIT LYSINE METHYLTRANSFERASE"/>
    <property type="match status" value="1"/>
</dbReference>
<dbReference type="Pfam" id="PF06325">
    <property type="entry name" value="PrmA"/>
    <property type="match status" value="1"/>
</dbReference>
<dbReference type="PIRSF" id="PIRSF000401">
    <property type="entry name" value="RPL11_MTase"/>
    <property type="match status" value="1"/>
</dbReference>
<dbReference type="SUPFAM" id="SSF53335">
    <property type="entry name" value="S-adenosyl-L-methionine-dependent methyltransferases"/>
    <property type="match status" value="1"/>
</dbReference>
<keyword id="KW-0963">Cytoplasm</keyword>
<keyword id="KW-0489">Methyltransferase</keyword>
<keyword id="KW-1185">Reference proteome</keyword>
<keyword id="KW-0949">S-adenosyl-L-methionine</keyword>
<keyword id="KW-0808">Transferase</keyword>
<name>PRMA_SYNR3</name>
<protein>
    <recommendedName>
        <fullName evidence="1">Ribosomal protein L11 methyltransferase</fullName>
        <shortName evidence="1">L11 Mtase</shortName>
        <ecNumber evidence="1">2.1.1.-</ecNumber>
    </recommendedName>
</protein>
<sequence>MPAAAQPSWWRLELEPPGELEESLLWRLESLGVHRLAVRFRPEAPEQRTLQAWLPEVDWPEPERVALAEALAQMAEPFGVALPSLRWELQPEEDWALSWKRHWQPDPVGQRLLILPAWLQVPAEHAERLALLIDPGSAFGTGSHPTTRLCLEALEKRSLTGSRVADLGCGSGILGIASLVLGAREVLASDTDSLAVRATAENAALNQAGAHLQVQLGSADVLQQLLAGAPADLLLCNILAPVLTALTPAFSELLTARGEGLLSGLLVDQAPALTAHLEAHGWRVTTEAEQGRWALLAIQRA</sequence>
<reference key="1">
    <citation type="submission" date="2006-05" db="EMBL/GenBank/DDBJ databases">
        <authorList>
            <consortium name="Genoscope"/>
        </authorList>
    </citation>
    <scope>NUCLEOTIDE SEQUENCE [LARGE SCALE GENOMIC DNA]</scope>
    <source>
        <strain>RCC307</strain>
    </source>
</reference>
<evidence type="ECO:0000255" key="1">
    <source>
        <dbReference type="HAMAP-Rule" id="MF_00735"/>
    </source>
</evidence>
<feature type="chain" id="PRO_1000132838" description="Ribosomal protein L11 methyltransferase">
    <location>
        <begin position="1"/>
        <end position="301"/>
    </location>
</feature>
<feature type="binding site" evidence="1">
    <location>
        <position position="147"/>
    </location>
    <ligand>
        <name>S-adenosyl-L-methionine</name>
        <dbReference type="ChEBI" id="CHEBI:59789"/>
    </ligand>
</feature>
<feature type="binding site" evidence="1">
    <location>
        <position position="168"/>
    </location>
    <ligand>
        <name>S-adenosyl-L-methionine</name>
        <dbReference type="ChEBI" id="CHEBI:59789"/>
    </ligand>
</feature>
<feature type="binding site" evidence="1">
    <location>
        <position position="190"/>
    </location>
    <ligand>
        <name>S-adenosyl-L-methionine</name>
        <dbReference type="ChEBI" id="CHEBI:59789"/>
    </ligand>
</feature>
<feature type="binding site" evidence="1">
    <location>
        <position position="237"/>
    </location>
    <ligand>
        <name>S-adenosyl-L-methionine</name>
        <dbReference type="ChEBI" id="CHEBI:59789"/>
    </ligand>
</feature>
<gene>
    <name evidence="1" type="primary">prmA</name>
    <name type="ordered locus">SynRCC307_1843</name>
</gene>